<organism>
    <name type="scientific">Corynebacterium diphtheriae (strain ATCC 700971 / NCTC 13129 / Biotype gravis)</name>
    <dbReference type="NCBI Taxonomy" id="257309"/>
    <lineage>
        <taxon>Bacteria</taxon>
        <taxon>Bacillati</taxon>
        <taxon>Actinomycetota</taxon>
        <taxon>Actinomycetes</taxon>
        <taxon>Mycobacteriales</taxon>
        <taxon>Corynebacteriaceae</taxon>
        <taxon>Corynebacterium</taxon>
    </lineage>
</organism>
<sequence>MAIKTLKDLLAEGVEGRHVLVRSDFNVPLNDDREITDAGRITASLPTIKALVDNGARVILMAHLGRPKGEVNEKFSLAPVAEALSEALGQYVALAGDVVGEDAHERANGLNDGDVLLLENVRFDPRETSKEEAERGEFADQLVALTAENGAFVSDGFGVVHRAQASVFDVAQRLPHYAGTLVEKELEVLGNKVASAPERPYAVILGGAKVSDKLGVIEALATKADKLIIGGGMCYTFLAAKGINVQKSLLQEEQINKCKELLEAYADKIVLPVDLVAAAEFASDAENKIVAIDEIPEGWMSLDVGPKTVEKFAEVLATSKTVFWNGPMGVFEFENFSAGTRGVAEAIIAATANGAFSVVGGGDSAAAVRLLGLDEDGFSHISTGGGASLELLEGKNLPGVSVLES</sequence>
<evidence type="ECO:0000255" key="1">
    <source>
        <dbReference type="HAMAP-Rule" id="MF_00145"/>
    </source>
</evidence>
<reference key="1">
    <citation type="journal article" date="2003" name="Nucleic Acids Res.">
        <title>The complete genome sequence and analysis of Corynebacterium diphtheriae NCTC13129.</title>
        <authorList>
            <person name="Cerdeno-Tarraga A.-M."/>
            <person name="Efstratiou A."/>
            <person name="Dover L.G."/>
            <person name="Holden M.T.G."/>
            <person name="Pallen M.J."/>
            <person name="Bentley S.D."/>
            <person name="Besra G.S."/>
            <person name="Churcher C.M."/>
            <person name="James K.D."/>
            <person name="De Zoysa A."/>
            <person name="Chillingworth T."/>
            <person name="Cronin A."/>
            <person name="Dowd L."/>
            <person name="Feltwell T."/>
            <person name="Hamlin N."/>
            <person name="Holroyd S."/>
            <person name="Jagels K."/>
            <person name="Moule S."/>
            <person name="Quail M.A."/>
            <person name="Rabbinowitsch E."/>
            <person name="Rutherford K.M."/>
            <person name="Thomson N.R."/>
            <person name="Unwin L."/>
            <person name="Whitehead S."/>
            <person name="Barrell B.G."/>
            <person name="Parkhill J."/>
        </authorList>
    </citation>
    <scope>NUCLEOTIDE SEQUENCE [LARGE SCALE GENOMIC DNA]</scope>
    <source>
        <strain>ATCC 700971 / NCTC 13129 / Biotype gravis</strain>
    </source>
</reference>
<accession>P62411</accession>
<feature type="chain" id="PRO_0000145935" description="Phosphoglycerate kinase">
    <location>
        <begin position="1"/>
        <end position="405"/>
    </location>
</feature>
<feature type="binding site" evidence="1">
    <location>
        <begin position="24"/>
        <end position="26"/>
    </location>
    <ligand>
        <name>substrate</name>
    </ligand>
</feature>
<feature type="binding site" evidence="1">
    <location>
        <position position="40"/>
    </location>
    <ligand>
        <name>substrate</name>
    </ligand>
</feature>
<feature type="binding site" evidence="1">
    <location>
        <begin position="63"/>
        <end position="66"/>
    </location>
    <ligand>
        <name>substrate</name>
    </ligand>
</feature>
<feature type="binding site" evidence="1">
    <location>
        <position position="122"/>
    </location>
    <ligand>
        <name>substrate</name>
    </ligand>
</feature>
<feature type="binding site" evidence="1">
    <location>
        <position position="162"/>
    </location>
    <ligand>
        <name>substrate</name>
    </ligand>
</feature>
<feature type="binding site" evidence="1">
    <location>
        <position position="213"/>
    </location>
    <ligand>
        <name>ATP</name>
        <dbReference type="ChEBI" id="CHEBI:30616"/>
    </ligand>
</feature>
<feature type="binding site" evidence="1">
    <location>
        <position position="332"/>
    </location>
    <ligand>
        <name>ATP</name>
        <dbReference type="ChEBI" id="CHEBI:30616"/>
    </ligand>
</feature>
<feature type="binding site" evidence="1">
    <location>
        <begin position="361"/>
        <end position="364"/>
    </location>
    <ligand>
        <name>ATP</name>
        <dbReference type="ChEBI" id="CHEBI:30616"/>
    </ligand>
</feature>
<protein>
    <recommendedName>
        <fullName evidence="1">Phosphoglycerate kinase</fullName>
        <ecNumber evidence="1">2.7.2.3</ecNumber>
    </recommendedName>
</protein>
<gene>
    <name evidence="1" type="primary">pgk</name>
    <name type="ordered locus">DIP1309</name>
</gene>
<keyword id="KW-0067">ATP-binding</keyword>
<keyword id="KW-0963">Cytoplasm</keyword>
<keyword id="KW-0324">Glycolysis</keyword>
<keyword id="KW-0418">Kinase</keyword>
<keyword id="KW-0547">Nucleotide-binding</keyword>
<keyword id="KW-1185">Reference proteome</keyword>
<keyword id="KW-0808">Transferase</keyword>
<name>PGK_CORDI</name>
<proteinExistence type="inferred from homology"/>
<comment type="catalytic activity">
    <reaction evidence="1">
        <text>(2R)-3-phosphoglycerate + ATP = (2R)-3-phospho-glyceroyl phosphate + ADP</text>
        <dbReference type="Rhea" id="RHEA:14801"/>
        <dbReference type="ChEBI" id="CHEBI:30616"/>
        <dbReference type="ChEBI" id="CHEBI:57604"/>
        <dbReference type="ChEBI" id="CHEBI:58272"/>
        <dbReference type="ChEBI" id="CHEBI:456216"/>
        <dbReference type="EC" id="2.7.2.3"/>
    </reaction>
</comment>
<comment type="pathway">
    <text evidence="1">Carbohydrate degradation; glycolysis; pyruvate from D-glyceraldehyde 3-phosphate: step 2/5.</text>
</comment>
<comment type="subunit">
    <text evidence="1">Monomer.</text>
</comment>
<comment type="subcellular location">
    <subcellularLocation>
        <location evidence="1">Cytoplasm</location>
    </subcellularLocation>
</comment>
<comment type="similarity">
    <text evidence="1">Belongs to the phosphoglycerate kinase family.</text>
</comment>
<dbReference type="EC" id="2.7.2.3" evidence="1"/>
<dbReference type="EMBL" id="BX248357">
    <property type="protein sequence ID" value="CAE49837.1"/>
    <property type="molecule type" value="Genomic_DNA"/>
</dbReference>
<dbReference type="RefSeq" id="WP_010934972.1">
    <property type="nucleotide sequence ID" value="NC_002935.2"/>
</dbReference>
<dbReference type="SMR" id="P62411"/>
<dbReference type="STRING" id="257309.DIP1309"/>
<dbReference type="KEGG" id="cdi:DIP1309"/>
<dbReference type="HOGENOM" id="CLU_025427_0_2_11"/>
<dbReference type="UniPathway" id="UPA00109">
    <property type="reaction ID" value="UER00185"/>
</dbReference>
<dbReference type="Proteomes" id="UP000002198">
    <property type="component" value="Chromosome"/>
</dbReference>
<dbReference type="GO" id="GO:0005829">
    <property type="term" value="C:cytosol"/>
    <property type="evidence" value="ECO:0007669"/>
    <property type="project" value="TreeGrafter"/>
</dbReference>
<dbReference type="GO" id="GO:0043531">
    <property type="term" value="F:ADP binding"/>
    <property type="evidence" value="ECO:0007669"/>
    <property type="project" value="TreeGrafter"/>
</dbReference>
<dbReference type="GO" id="GO:0005524">
    <property type="term" value="F:ATP binding"/>
    <property type="evidence" value="ECO:0007669"/>
    <property type="project" value="UniProtKB-KW"/>
</dbReference>
<dbReference type="GO" id="GO:0004618">
    <property type="term" value="F:phosphoglycerate kinase activity"/>
    <property type="evidence" value="ECO:0007669"/>
    <property type="project" value="UniProtKB-UniRule"/>
</dbReference>
<dbReference type="GO" id="GO:0006094">
    <property type="term" value="P:gluconeogenesis"/>
    <property type="evidence" value="ECO:0007669"/>
    <property type="project" value="TreeGrafter"/>
</dbReference>
<dbReference type="GO" id="GO:0006096">
    <property type="term" value="P:glycolytic process"/>
    <property type="evidence" value="ECO:0007669"/>
    <property type="project" value="UniProtKB-UniRule"/>
</dbReference>
<dbReference type="CDD" id="cd00318">
    <property type="entry name" value="Phosphoglycerate_kinase"/>
    <property type="match status" value="1"/>
</dbReference>
<dbReference type="FunFam" id="3.40.50.1260:FF:000003">
    <property type="entry name" value="Phosphoglycerate kinase"/>
    <property type="match status" value="1"/>
</dbReference>
<dbReference type="FunFam" id="3.40.50.1260:FF:000006">
    <property type="entry name" value="Phosphoglycerate kinase"/>
    <property type="match status" value="1"/>
</dbReference>
<dbReference type="Gene3D" id="3.40.50.1260">
    <property type="entry name" value="Phosphoglycerate kinase, N-terminal domain"/>
    <property type="match status" value="2"/>
</dbReference>
<dbReference type="HAMAP" id="MF_00145">
    <property type="entry name" value="Phosphoglyc_kinase"/>
    <property type="match status" value="1"/>
</dbReference>
<dbReference type="InterPro" id="IPR001576">
    <property type="entry name" value="Phosphoglycerate_kinase"/>
</dbReference>
<dbReference type="InterPro" id="IPR015911">
    <property type="entry name" value="Phosphoglycerate_kinase_CS"/>
</dbReference>
<dbReference type="InterPro" id="IPR015824">
    <property type="entry name" value="Phosphoglycerate_kinase_N"/>
</dbReference>
<dbReference type="InterPro" id="IPR036043">
    <property type="entry name" value="Phosphoglycerate_kinase_sf"/>
</dbReference>
<dbReference type="PANTHER" id="PTHR11406">
    <property type="entry name" value="PHOSPHOGLYCERATE KINASE"/>
    <property type="match status" value="1"/>
</dbReference>
<dbReference type="PANTHER" id="PTHR11406:SF23">
    <property type="entry name" value="PHOSPHOGLYCERATE KINASE 1, CHLOROPLASTIC-RELATED"/>
    <property type="match status" value="1"/>
</dbReference>
<dbReference type="Pfam" id="PF00162">
    <property type="entry name" value="PGK"/>
    <property type="match status" value="1"/>
</dbReference>
<dbReference type="PIRSF" id="PIRSF000724">
    <property type="entry name" value="Pgk"/>
    <property type="match status" value="1"/>
</dbReference>
<dbReference type="PRINTS" id="PR00477">
    <property type="entry name" value="PHGLYCKINASE"/>
</dbReference>
<dbReference type="SUPFAM" id="SSF53748">
    <property type="entry name" value="Phosphoglycerate kinase"/>
    <property type="match status" value="1"/>
</dbReference>
<dbReference type="PROSITE" id="PS00111">
    <property type="entry name" value="PGLYCERATE_KINASE"/>
    <property type="match status" value="1"/>
</dbReference>